<evidence type="ECO:0000250" key="1">
    <source>
        <dbReference type="UniProtKB" id="A0A193H362"/>
    </source>
</evidence>
<evidence type="ECO:0000269" key="2">
    <source>
    </source>
</evidence>
<evidence type="ECO:0000303" key="3">
    <source>
    </source>
</evidence>
<evidence type="ECO:0000305" key="4"/>
<evidence type="ECO:0000305" key="5">
    <source>
    </source>
</evidence>
<protein>
    <recommendedName>
        <fullName evidence="3">Cruzioseptin-10</fullName>
        <shortName evidence="3">CZS-10</shortName>
    </recommendedName>
</protein>
<keyword id="KW-0878">Amphibian defense peptide</keyword>
<keyword id="KW-0929">Antimicrobial</keyword>
<keyword id="KW-0903">Direct protein sequencing</keyword>
<keyword id="KW-0964">Secreted</keyword>
<comment type="function">
    <text evidence="1">Has antimicrobial activity.</text>
</comment>
<comment type="subcellular location">
    <subcellularLocation>
        <location evidence="2">Secreted</location>
    </subcellularLocation>
</comment>
<comment type="tissue specificity">
    <text evidence="5">Expressed by the skin glands.</text>
</comment>
<comment type="mass spectrometry" mass="2912.6" method="Electrospray" evidence="2"/>
<comment type="similarity">
    <text evidence="4">Belongs to the frog skin active peptide (FSAP) family. Cruzioseptin subfamily.</text>
</comment>
<dbReference type="GO" id="GO:0005576">
    <property type="term" value="C:extracellular region"/>
    <property type="evidence" value="ECO:0000314"/>
    <property type="project" value="UniProtKB"/>
</dbReference>
<dbReference type="GO" id="GO:0006952">
    <property type="term" value="P:defense response"/>
    <property type="evidence" value="ECO:0007669"/>
    <property type="project" value="UniProtKB-KW"/>
</dbReference>
<name>CZS10_CRUCA</name>
<feature type="peptide" id="PRO_0000439479" description="Cruzioseptin-10" evidence="2">
    <location>
        <begin position="1"/>
        <end position="28"/>
    </location>
</feature>
<sequence length="28" mass="2914">GFLDVLKGVGKAALGAVTHHINNLVNQQ</sequence>
<reference evidence="4" key="1">
    <citation type="journal article" date="2016" name="J. Proteomics">
        <title>Peptidomic approach identifies cruzioseptins, a new family of potent antimicrobial peptides in the splendid leaf frog, Cruziohyla calcarifer.</title>
        <authorList>
            <person name="Proano-Bolanos C."/>
            <person name="Zhou M."/>
            <person name="Wang L."/>
            <person name="Coloma L.A."/>
            <person name="Chen T."/>
            <person name="Shaw C."/>
        </authorList>
    </citation>
    <scope>PROTEIN SEQUENCE</scope>
    <scope>SUBCELLULAR LOCATION</scope>
    <scope>MASS SPECTROMETRY</scope>
    <scope>IDENTIFICATION BY MASS SPECTROMETRY</scope>
    <source>
        <tissue evidence="3">Skin secretion</tissue>
    </source>
</reference>
<organism evidence="3">
    <name type="scientific">Cruziohyla calcarifer</name>
    <name type="common">Splendid leaf frog</name>
    <name type="synonym">Agalychnis calcarifer</name>
    <dbReference type="NCBI Taxonomy" id="318249"/>
    <lineage>
        <taxon>Eukaryota</taxon>
        <taxon>Metazoa</taxon>
        <taxon>Chordata</taxon>
        <taxon>Craniata</taxon>
        <taxon>Vertebrata</taxon>
        <taxon>Euteleostomi</taxon>
        <taxon>Amphibia</taxon>
        <taxon>Batrachia</taxon>
        <taxon>Anura</taxon>
        <taxon>Neobatrachia</taxon>
        <taxon>Hyloidea</taxon>
        <taxon>Hylidae</taxon>
        <taxon>Phyllomedusinae</taxon>
        <taxon>Cruziohyla</taxon>
    </lineage>
</organism>
<proteinExistence type="evidence at protein level"/>
<accession>C0HK08</accession>